<reference key="1">
    <citation type="journal article" date="2008" name="BMC Genomics">
        <title>Acidithiobacillus ferrooxidans metabolism: from genome sequence to industrial applications.</title>
        <authorList>
            <person name="Valdes J."/>
            <person name="Pedroso I."/>
            <person name="Quatrini R."/>
            <person name="Dodson R.J."/>
            <person name="Tettelin H."/>
            <person name="Blake R. II"/>
            <person name="Eisen J.A."/>
            <person name="Holmes D.S."/>
        </authorList>
    </citation>
    <scope>NUCLEOTIDE SEQUENCE [LARGE SCALE GENOMIC DNA]</scope>
    <source>
        <strain>ATCC 23270 / DSM 14882 / CIP 104768 / NCIMB 8455</strain>
    </source>
</reference>
<sequence length="296" mass="31745">MSDKLRQIAFYGKGGIGKSTTSQNTLAALTEMGQKILIVGCDPKADSTRLILHSKAQDTVLSLAAEAGSVEDLEIEDVMKVGYRDIRCVESGGPEPGVGCAGRGVITSINFLEENGAYDGVDYVSYDVLGDVVCGGFAMPIRENKAQEIYIVMSGEMMAMYAANNISKGILKYANSGGVRLGGLVCNERQTDKELELAEALAGKLGTKLIHFVPRDNIVQHAELRRMTVLEYAPESKQAEEYRQLAQKIHANGGNGTIPTPITMDELEEMLMEFGIMSAVDESVIGKSAAELAAAV</sequence>
<accession>B7JA99</accession>
<feature type="chain" id="PRO_1000211850" description="Nitrogenase iron protein">
    <location>
        <begin position="1"/>
        <end position="296"/>
    </location>
</feature>
<feature type="binding site" evidence="1">
    <location>
        <begin position="12"/>
        <end position="19"/>
    </location>
    <ligand>
        <name>ATP</name>
        <dbReference type="ChEBI" id="CHEBI:30616"/>
    </ligand>
</feature>
<feature type="binding site" evidence="1">
    <location>
        <position position="100"/>
    </location>
    <ligand>
        <name>[4Fe-4S] cluster</name>
        <dbReference type="ChEBI" id="CHEBI:49883"/>
        <note>ligand shared between dimeric partners</note>
    </ligand>
</feature>
<feature type="binding site" evidence="1">
    <location>
        <position position="134"/>
    </location>
    <ligand>
        <name>[4Fe-4S] cluster</name>
        <dbReference type="ChEBI" id="CHEBI:49883"/>
        <note>ligand shared between dimeric partners</note>
    </ligand>
</feature>
<feature type="modified residue" description="ADP-ribosylarginine; by dinitrogenase reductase ADP-ribosyltransferase" evidence="1">
    <location>
        <position position="103"/>
    </location>
</feature>
<organism>
    <name type="scientific">Acidithiobacillus ferrooxidans (strain ATCC 23270 / DSM 14882 / CIP 104768 / NCIMB 8455)</name>
    <name type="common">Ferrobacillus ferrooxidans (strain ATCC 23270)</name>
    <dbReference type="NCBI Taxonomy" id="243159"/>
    <lineage>
        <taxon>Bacteria</taxon>
        <taxon>Pseudomonadati</taxon>
        <taxon>Pseudomonadota</taxon>
        <taxon>Acidithiobacillia</taxon>
        <taxon>Acidithiobacillales</taxon>
        <taxon>Acidithiobacillaceae</taxon>
        <taxon>Acidithiobacillus</taxon>
    </lineage>
</organism>
<name>NIFH_ACIF2</name>
<dbReference type="EC" id="1.18.6.1" evidence="1"/>
<dbReference type="EMBL" id="CP001219">
    <property type="protein sequence ID" value="ACK79918.1"/>
    <property type="molecule type" value="Genomic_DNA"/>
</dbReference>
<dbReference type="RefSeq" id="WP_009567494.1">
    <property type="nucleotide sequence ID" value="NC_011761.1"/>
</dbReference>
<dbReference type="SMR" id="B7JA99"/>
<dbReference type="STRING" id="243159.AFE_1522"/>
<dbReference type="PaxDb" id="243159-AFE_1522"/>
<dbReference type="GeneID" id="65280741"/>
<dbReference type="KEGG" id="afr:AFE_1522"/>
<dbReference type="eggNOG" id="COG1348">
    <property type="taxonomic scope" value="Bacteria"/>
</dbReference>
<dbReference type="HOGENOM" id="CLU_059373_0_0_6"/>
<dbReference type="Proteomes" id="UP000001362">
    <property type="component" value="Chromosome"/>
</dbReference>
<dbReference type="GO" id="GO:0051539">
    <property type="term" value="F:4 iron, 4 sulfur cluster binding"/>
    <property type="evidence" value="ECO:0007669"/>
    <property type="project" value="UniProtKB-KW"/>
</dbReference>
<dbReference type="GO" id="GO:0005524">
    <property type="term" value="F:ATP binding"/>
    <property type="evidence" value="ECO:0007669"/>
    <property type="project" value="UniProtKB-UniRule"/>
</dbReference>
<dbReference type="GO" id="GO:0046872">
    <property type="term" value="F:metal ion binding"/>
    <property type="evidence" value="ECO:0007669"/>
    <property type="project" value="UniProtKB-KW"/>
</dbReference>
<dbReference type="GO" id="GO:0016163">
    <property type="term" value="F:nitrogenase activity"/>
    <property type="evidence" value="ECO:0007669"/>
    <property type="project" value="UniProtKB-UniRule"/>
</dbReference>
<dbReference type="GO" id="GO:0009399">
    <property type="term" value="P:nitrogen fixation"/>
    <property type="evidence" value="ECO:0007669"/>
    <property type="project" value="UniProtKB-UniRule"/>
</dbReference>
<dbReference type="CDD" id="cd02040">
    <property type="entry name" value="NifH"/>
    <property type="match status" value="1"/>
</dbReference>
<dbReference type="FunFam" id="3.40.50.300:FF:001379">
    <property type="entry name" value="Nitrogenase iron protein 1"/>
    <property type="match status" value="1"/>
</dbReference>
<dbReference type="Gene3D" id="3.40.50.300">
    <property type="entry name" value="P-loop containing nucleotide triphosphate hydrolases"/>
    <property type="match status" value="1"/>
</dbReference>
<dbReference type="HAMAP" id="MF_00533">
    <property type="entry name" value="NifH"/>
    <property type="match status" value="1"/>
</dbReference>
<dbReference type="InterPro" id="IPR030655">
    <property type="entry name" value="NifH/chlL_CS"/>
</dbReference>
<dbReference type="InterPro" id="IPR000392">
    <property type="entry name" value="NifH/frxC"/>
</dbReference>
<dbReference type="InterPro" id="IPR005977">
    <property type="entry name" value="Nitrogenase_Fe_NifH"/>
</dbReference>
<dbReference type="InterPro" id="IPR027417">
    <property type="entry name" value="P-loop_NTPase"/>
</dbReference>
<dbReference type="NCBIfam" id="TIGR01287">
    <property type="entry name" value="nifH"/>
    <property type="match status" value="1"/>
</dbReference>
<dbReference type="PANTHER" id="PTHR42864">
    <property type="entry name" value="LIGHT-INDEPENDENT PROTOCHLOROPHYLLIDE REDUCTASE IRON-SULFUR ATP-BINDING PROTEIN"/>
    <property type="match status" value="1"/>
</dbReference>
<dbReference type="PANTHER" id="PTHR42864:SF2">
    <property type="entry name" value="LIGHT-INDEPENDENT PROTOCHLOROPHYLLIDE REDUCTASE IRON-SULFUR ATP-BINDING PROTEIN"/>
    <property type="match status" value="1"/>
</dbReference>
<dbReference type="Pfam" id="PF00142">
    <property type="entry name" value="Fer4_NifH"/>
    <property type="match status" value="1"/>
</dbReference>
<dbReference type="PIRSF" id="PIRSF000363">
    <property type="entry name" value="Nitrogenase_iron"/>
    <property type="match status" value="1"/>
</dbReference>
<dbReference type="PRINTS" id="PR00091">
    <property type="entry name" value="NITROGNASEII"/>
</dbReference>
<dbReference type="SUPFAM" id="SSF52540">
    <property type="entry name" value="P-loop containing nucleoside triphosphate hydrolases"/>
    <property type="match status" value="1"/>
</dbReference>
<dbReference type="PROSITE" id="PS00746">
    <property type="entry name" value="NIFH_FRXC_1"/>
    <property type="match status" value="1"/>
</dbReference>
<dbReference type="PROSITE" id="PS00692">
    <property type="entry name" value="NIFH_FRXC_2"/>
    <property type="match status" value="1"/>
</dbReference>
<dbReference type="PROSITE" id="PS51026">
    <property type="entry name" value="NIFH_FRXC_3"/>
    <property type="match status" value="1"/>
</dbReference>
<keyword id="KW-0004">4Fe-4S</keyword>
<keyword id="KW-0013">ADP-ribosylation</keyword>
<keyword id="KW-0067">ATP-binding</keyword>
<keyword id="KW-0408">Iron</keyword>
<keyword id="KW-0411">Iron-sulfur</keyword>
<keyword id="KW-0479">Metal-binding</keyword>
<keyword id="KW-0535">Nitrogen fixation</keyword>
<keyword id="KW-0547">Nucleotide-binding</keyword>
<keyword id="KW-0560">Oxidoreductase</keyword>
<keyword id="KW-1185">Reference proteome</keyword>
<comment type="function">
    <text evidence="1">The key enzymatic reactions in nitrogen fixation are catalyzed by the nitrogenase complex, which has 2 components: the iron protein and the molybdenum-iron protein.</text>
</comment>
<comment type="catalytic activity">
    <reaction evidence="1">
        <text>N2 + 8 reduced [2Fe-2S]-[ferredoxin] + 16 ATP + 16 H2O = H2 + 8 oxidized [2Fe-2S]-[ferredoxin] + 2 NH4(+) + 16 ADP + 16 phosphate + 6 H(+)</text>
        <dbReference type="Rhea" id="RHEA:21448"/>
        <dbReference type="Rhea" id="RHEA-COMP:10000"/>
        <dbReference type="Rhea" id="RHEA-COMP:10001"/>
        <dbReference type="ChEBI" id="CHEBI:15377"/>
        <dbReference type="ChEBI" id="CHEBI:15378"/>
        <dbReference type="ChEBI" id="CHEBI:17997"/>
        <dbReference type="ChEBI" id="CHEBI:18276"/>
        <dbReference type="ChEBI" id="CHEBI:28938"/>
        <dbReference type="ChEBI" id="CHEBI:30616"/>
        <dbReference type="ChEBI" id="CHEBI:33737"/>
        <dbReference type="ChEBI" id="CHEBI:33738"/>
        <dbReference type="ChEBI" id="CHEBI:43474"/>
        <dbReference type="ChEBI" id="CHEBI:456216"/>
        <dbReference type="EC" id="1.18.6.1"/>
    </reaction>
</comment>
<comment type="cofactor">
    <cofactor evidence="1">
        <name>[4Fe-4S] cluster</name>
        <dbReference type="ChEBI" id="CHEBI:49883"/>
    </cofactor>
    <text evidence="1">Binds 1 [4Fe-4S] cluster per dimer.</text>
</comment>
<comment type="subunit">
    <text evidence="1">Homodimer.</text>
</comment>
<comment type="PTM">
    <text evidence="1">The reversible ADP-ribosylation of Arg-103 inactivates the nitrogenase reductase and regulates nitrogenase activity.</text>
</comment>
<comment type="similarity">
    <text evidence="1">Belongs to the NifH/BchL/ChlL family.</text>
</comment>
<proteinExistence type="inferred from homology"/>
<protein>
    <recommendedName>
        <fullName evidence="1">Nitrogenase iron protein</fullName>
        <ecNumber evidence="1">1.18.6.1</ecNumber>
    </recommendedName>
    <alternativeName>
        <fullName evidence="1">Nitrogenase Fe protein</fullName>
    </alternativeName>
    <alternativeName>
        <fullName evidence="1">Nitrogenase component II</fullName>
    </alternativeName>
    <alternativeName>
        <fullName evidence="1">Nitrogenase reductase</fullName>
    </alternativeName>
</protein>
<evidence type="ECO:0000255" key="1">
    <source>
        <dbReference type="HAMAP-Rule" id="MF_00533"/>
    </source>
</evidence>
<gene>
    <name evidence="1" type="primary">nifH</name>
    <name type="ordered locus">AFE_1522</name>
</gene>